<keyword id="KW-0025">Alternative splicing</keyword>
<keyword id="KW-0053">Apoptosis</keyword>
<keyword id="KW-0963">Cytoplasm</keyword>
<keyword id="KW-0968">Cytoplasmic vesicle</keyword>
<keyword id="KW-0206">Cytoskeleton</keyword>
<keyword id="KW-0472">Membrane</keyword>
<keyword id="KW-0496">Mitochondrion</keyword>
<keyword id="KW-0539">Nucleus</keyword>
<keyword id="KW-1185">Reference proteome</keyword>
<keyword id="KW-0770">Synapse</keyword>
<keyword id="KW-0812">Transmembrane</keyword>
<keyword id="KW-1133">Transmembrane helix</keyword>
<accession>Q07816</accession>
<accession>Q98908</accession>
<organism>
    <name type="scientific">Gallus gallus</name>
    <name type="common">Chicken</name>
    <dbReference type="NCBI Taxonomy" id="9031"/>
    <lineage>
        <taxon>Eukaryota</taxon>
        <taxon>Metazoa</taxon>
        <taxon>Chordata</taxon>
        <taxon>Craniata</taxon>
        <taxon>Vertebrata</taxon>
        <taxon>Euteleostomi</taxon>
        <taxon>Archelosauria</taxon>
        <taxon>Archosauria</taxon>
        <taxon>Dinosauria</taxon>
        <taxon>Saurischia</taxon>
        <taxon>Theropoda</taxon>
        <taxon>Coelurosauria</taxon>
        <taxon>Aves</taxon>
        <taxon>Neognathae</taxon>
        <taxon>Galloanserae</taxon>
        <taxon>Galliformes</taxon>
        <taxon>Phasianidae</taxon>
        <taxon>Phasianinae</taxon>
        <taxon>Gallus</taxon>
    </lineage>
</organism>
<sequence>MSSSNRELVIDFVSYKLSQRGHCWSELEEEDENRTDTAAEAEMDSVLNGSPSWHPPAGHVVNGATVHRSSLEVHEIVRASDVRQALRDAGDEFELRYRRAFSDLTSQLHITPGTAYQSFEQVVNELFHDGVNWGRIVAFFSFGGALCVESVDKEMRVLVGRIVSWMTTYLTDHLDPWIQENGGWERFVDLYGNNAAAELRKGQETFNKWLLTGATVAGVLLLGSLLSRK</sequence>
<reference key="1">
    <citation type="journal article" date="1993" name="Cell">
        <title>bcl-x, a bcl-2-related gene that functions as a dominant regulator of apoptotic cell death.</title>
        <authorList>
            <person name="Boise L.H."/>
            <person name="Gonzalez-Garcia M."/>
            <person name="Postema C.E."/>
            <person name="Ding L."/>
            <person name="Lindsten T."/>
            <person name="Turka L.A."/>
            <person name="Mao X."/>
            <person name="Nunez G."/>
            <person name="Thompson C.B."/>
        </authorList>
    </citation>
    <scope>NUCLEOTIDE SEQUENCE [GENOMIC DNA] (ISOFORM SHORT)</scope>
</reference>
<reference key="2">
    <citation type="journal article" date="1997" name="Mol. Reprod. Dev.">
        <title>Differential expression of bcl-2 and bcl-x during chicken spermatogenesis.</title>
        <authorList>
            <person name="Vilagrasa X."/>
            <person name="Mezquita C."/>
            <person name="Mezquita J."/>
        </authorList>
    </citation>
    <scope>NUCLEOTIDE SEQUENCE [MRNA] (ISOFORM LONG)</scope>
    <source>
        <strain>Hubbard White Mountain</strain>
        <tissue>Testis</tissue>
    </source>
</reference>
<dbReference type="EMBL" id="Z23110">
    <property type="protein sequence ID" value="CAA80657.1"/>
    <property type="molecule type" value="Genomic_DNA"/>
</dbReference>
<dbReference type="EMBL" id="U26645">
    <property type="protein sequence ID" value="AAB07677.1"/>
    <property type="molecule type" value="mRNA"/>
</dbReference>
<dbReference type="PIR" id="A47537">
    <property type="entry name" value="A47537"/>
</dbReference>
<dbReference type="RefSeq" id="NP_001020475.1">
    <molecule id="Q07816-1"/>
    <property type="nucleotide sequence ID" value="NM_001025304.1"/>
</dbReference>
<dbReference type="RefSeq" id="XP_015151803.1">
    <molecule id="Q07816-1"/>
    <property type="nucleotide sequence ID" value="XM_015296317.4"/>
</dbReference>
<dbReference type="RefSeq" id="XP_015151804.1">
    <molecule id="Q07816-1"/>
    <property type="nucleotide sequence ID" value="XM_015296318.4"/>
</dbReference>
<dbReference type="RefSeq" id="XP_015151805.1">
    <molecule id="Q07816-1"/>
    <property type="nucleotide sequence ID" value="XM_015296319.4"/>
</dbReference>
<dbReference type="RefSeq" id="XP_015151806.1">
    <property type="nucleotide sequence ID" value="XM_015296320.1"/>
</dbReference>
<dbReference type="RefSeq" id="XP_046786503.1">
    <molecule id="Q07816-1"/>
    <property type="nucleotide sequence ID" value="XM_046930547.1"/>
</dbReference>
<dbReference type="RefSeq" id="XP_046786504.1">
    <molecule id="Q07816-1"/>
    <property type="nucleotide sequence ID" value="XM_046930548.1"/>
</dbReference>
<dbReference type="RefSeq" id="XP_046786505.1">
    <molecule id="Q07816-1"/>
    <property type="nucleotide sequence ID" value="XM_046930549.1"/>
</dbReference>
<dbReference type="SMR" id="Q07816"/>
<dbReference type="FunCoup" id="Q07816">
    <property type="interactions" value="992"/>
</dbReference>
<dbReference type="STRING" id="9031.ENSGALP00000054103"/>
<dbReference type="PaxDb" id="9031-ENSGALP00000010012"/>
<dbReference type="Ensembl" id="ENSGALT00010033754.1">
    <molecule id="Q07816-1"/>
    <property type="protein sequence ID" value="ENSGALP00010019864.1"/>
    <property type="gene ID" value="ENSGALG00010014066.1"/>
</dbReference>
<dbReference type="GeneID" id="373954"/>
<dbReference type="KEGG" id="gga:373954"/>
<dbReference type="CTD" id="598"/>
<dbReference type="VEuPathDB" id="HostDB:geneid_373954"/>
<dbReference type="eggNOG" id="KOG4728">
    <property type="taxonomic scope" value="Eukaryota"/>
</dbReference>
<dbReference type="GeneTree" id="ENSGT01130000278332"/>
<dbReference type="HOGENOM" id="CLU_085401_0_1_1"/>
<dbReference type="InParanoid" id="Q07816"/>
<dbReference type="OMA" id="HAPTSHI"/>
<dbReference type="OrthoDB" id="6021377at2759"/>
<dbReference type="PhylomeDB" id="Q07816"/>
<dbReference type="TreeFam" id="TF315834"/>
<dbReference type="Reactome" id="R-GGA-111453">
    <property type="pathway name" value="BH3-only proteins associate with and inactivate anti-apoptotic BCL-2 members"/>
</dbReference>
<dbReference type="Reactome" id="R-GGA-844455">
    <property type="pathway name" value="The NLRP1 inflammasome"/>
</dbReference>
<dbReference type="Reactome" id="R-GGA-9648002">
    <property type="pathway name" value="RAS processing"/>
</dbReference>
<dbReference type="PRO" id="PR:Q07816"/>
<dbReference type="Proteomes" id="UP000000539">
    <property type="component" value="Chromosome 20"/>
</dbReference>
<dbReference type="Bgee" id="ENSGALG00000006211">
    <property type="expression patterns" value="Expressed in lung and 13 other cell types or tissues"/>
</dbReference>
<dbReference type="GO" id="GO:0097136">
    <property type="term" value="C:Bcl-2 family protein complex"/>
    <property type="evidence" value="ECO:0007669"/>
    <property type="project" value="Ensembl"/>
</dbReference>
<dbReference type="GO" id="GO:0005813">
    <property type="term" value="C:centrosome"/>
    <property type="evidence" value="ECO:0000250"/>
    <property type="project" value="UniProtKB"/>
</dbReference>
<dbReference type="GO" id="GO:0005829">
    <property type="term" value="C:cytosol"/>
    <property type="evidence" value="ECO:0007669"/>
    <property type="project" value="UniProtKB-SubCell"/>
</dbReference>
<dbReference type="GO" id="GO:0005783">
    <property type="term" value="C:endoplasmic reticulum"/>
    <property type="evidence" value="ECO:0007669"/>
    <property type="project" value="Ensembl"/>
</dbReference>
<dbReference type="GO" id="GO:0005759">
    <property type="term" value="C:mitochondrial matrix"/>
    <property type="evidence" value="ECO:0007669"/>
    <property type="project" value="UniProtKB-SubCell"/>
</dbReference>
<dbReference type="GO" id="GO:0005741">
    <property type="term" value="C:mitochondrial outer membrane"/>
    <property type="evidence" value="ECO:0000318"/>
    <property type="project" value="GO_Central"/>
</dbReference>
<dbReference type="GO" id="GO:0031965">
    <property type="term" value="C:nuclear membrane"/>
    <property type="evidence" value="ECO:0007669"/>
    <property type="project" value="UniProtKB-SubCell"/>
</dbReference>
<dbReference type="GO" id="GO:0030672">
    <property type="term" value="C:synaptic vesicle membrane"/>
    <property type="evidence" value="ECO:0007669"/>
    <property type="project" value="UniProtKB-SubCell"/>
</dbReference>
<dbReference type="GO" id="GO:0051434">
    <property type="term" value="F:BH3 domain binding"/>
    <property type="evidence" value="ECO:0007669"/>
    <property type="project" value="Ensembl"/>
</dbReference>
<dbReference type="GO" id="GO:0015267">
    <property type="term" value="F:channel activity"/>
    <property type="evidence" value="ECO:0000318"/>
    <property type="project" value="GO_Central"/>
</dbReference>
<dbReference type="GO" id="GO:0042802">
    <property type="term" value="F:identical protein binding"/>
    <property type="evidence" value="ECO:0007669"/>
    <property type="project" value="Ensembl"/>
</dbReference>
<dbReference type="GO" id="GO:0019901">
    <property type="term" value="F:protein kinase binding"/>
    <property type="evidence" value="ECO:0007669"/>
    <property type="project" value="Ensembl"/>
</dbReference>
<dbReference type="GO" id="GO:0071839">
    <property type="term" value="P:apoptotic process in bone marrow cell"/>
    <property type="evidence" value="ECO:0007669"/>
    <property type="project" value="Ensembl"/>
</dbReference>
<dbReference type="GO" id="GO:0071312">
    <property type="term" value="P:cellular response to alkaloid"/>
    <property type="evidence" value="ECO:0007669"/>
    <property type="project" value="Ensembl"/>
</dbReference>
<dbReference type="GO" id="GO:0071230">
    <property type="term" value="P:cellular response to amino acid stimulus"/>
    <property type="evidence" value="ECO:0007669"/>
    <property type="project" value="Ensembl"/>
</dbReference>
<dbReference type="GO" id="GO:0071480">
    <property type="term" value="P:cellular response to gamma radiation"/>
    <property type="evidence" value="ECO:0007669"/>
    <property type="project" value="Ensembl"/>
</dbReference>
<dbReference type="GO" id="GO:0051607">
    <property type="term" value="P:defense response to virus"/>
    <property type="evidence" value="ECO:0007669"/>
    <property type="project" value="Ensembl"/>
</dbReference>
<dbReference type="GO" id="GO:0097048">
    <property type="term" value="P:dendritic cell apoptotic process"/>
    <property type="evidence" value="ECO:0007669"/>
    <property type="project" value="Ensembl"/>
</dbReference>
<dbReference type="GO" id="GO:0044565">
    <property type="term" value="P:dendritic cell proliferation"/>
    <property type="evidence" value="ECO:0007669"/>
    <property type="project" value="Ensembl"/>
</dbReference>
<dbReference type="GO" id="GO:0035234">
    <property type="term" value="P:ectopic germ cell programmed cell death"/>
    <property type="evidence" value="ECO:0007669"/>
    <property type="project" value="Ensembl"/>
</dbReference>
<dbReference type="GO" id="GO:0050673">
    <property type="term" value="P:epithelial cell proliferation"/>
    <property type="evidence" value="ECO:0007669"/>
    <property type="project" value="Ensembl"/>
</dbReference>
<dbReference type="GO" id="GO:0097192">
    <property type="term" value="P:extrinsic apoptotic signaling pathway in absence of ligand"/>
    <property type="evidence" value="ECO:0000318"/>
    <property type="project" value="GO_Central"/>
</dbReference>
<dbReference type="GO" id="GO:0009566">
    <property type="term" value="P:fertilization"/>
    <property type="evidence" value="ECO:0007669"/>
    <property type="project" value="Ensembl"/>
</dbReference>
<dbReference type="GO" id="GO:0007281">
    <property type="term" value="P:germ cell development"/>
    <property type="evidence" value="ECO:0007669"/>
    <property type="project" value="Ensembl"/>
</dbReference>
<dbReference type="GO" id="GO:0097284">
    <property type="term" value="P:hepatocyte apoptotic process"/>
    <property type="evidence" value="ECO:0007669"/>
    <property type="project" value="Ensembl"/>
</dbReference>
<dbReference type="GO" id="GO:0008630">
    <property type="term" value="P:intrinsic apoptotic signaling pathway in response to DNA damage"/>
    <property type="evidence" value="ECO:0000318"/>
    <property type="project" value="GO_Central"/>
</dbReference>
<dbReference type="GO" id="GO:0008584">
    <property type="term" value="P:male gonad development"/>
    <property type="evidence" value="ECO:0007669"/>
    <property type="project" value="Ensembl"/>
</dbReference>
<dbReference type="GO" id="GO:2000669">
    <property type="term" value="P:negative regulation of dendritic cell apoptotic process"/>
    <property type="evidence" value="ECO:0007669"/>
    <property type="project" value="Ensembl"/>
</dbReference>
<dbReference type="GO" id="GO:0051093">
    <property type="term" value="P:negative regulation of developmental process"/>
    <property type="evidence" value="ECO:0007669"/>
    <property type="project" value="Ensembl"/>
</dbReference>
<dbReference type="GO" id="GO:1902236">
    <property type="term" value="P:negative regulation of endoplasmic reticulum stress-induced intrinsic apoptotic signaling pathway"/>
    <property type="evidence" value="ECO:0007669"/>
    <property type="project" value="Ensembl"/>
</dbReference>
<dbReference type="GO" id="GO:1900118">
    <property type="term" value="P:negative regulation of execution phase of apoptosis"/>
    <property type="evidence" value="ECO:0007669"/>
    <property type="project" value="Ensembl"/>
</dbReference>
<dbReference type="GO" id="GO:1902042">
    <property type="term" value="P:negative regulation of extrinsic apoptotic signaling pathway via death domain receptors"/>
    <property type="evidence" value="ECO:0007669"/>
    <property type="project" value="Ensembl"/>
</dbReference>
<dbReference type="GO" id="GO:1902230">
    <property type="term" value="P:negative regulation of intrinsic apoptotic signaling pathway in response to DNA damage"/>
    <property type="evidence" value="ECO:0007669"/>
    <property type="project" value="Ensembl"/>
</dbReference>
<dbReference type="GO" id="GO:0043524">
    <property type="term" value="P:negative regulation of neuron apoptotic process"/>
    <property type="evidence" value="ECO:0007669"/>
    <property type="project" value="Ensembl"/>
</dbReference>
<dbReference type="GO" id="GO:1903077">
    <property type="term" value="P:negative regulation of protein localization to plasma membrane"/>
    <property type="evidence" value="ECO:0007669"/>
    <property type="project" value="Ensembl"/>
</dbReference>
<dbReference type="GO" id="GO:2000242">
    <property type="term" value="P:negative regulation of reproductive process"/>
    <property type="evidence" value="ECO:0007669"/>
    <property type="project" value="Ensembl"/>
</dbReference>
<dbReference type="GO" id="GO:0051402">
    <property type="term" value="P:neuron apoptotic process"/>
    <property type="evidence" value="ECO:0007669"/>
    <property type="project" value="Ensembl"/>
</dbReference>
<dbReference type="GO" id="GO:0001541">
    <property type="term" value="P:ovarian follicle development"/>
    <property type="evidence" value="ECO:0007669"/>
    <property type="project" value="Ensembl"/>
</dbReference>
<dbReference type="GO" id="GO:0043065">
    <property type="term" value="P:positive regulation of apoptotic process"/>
    <property type="evidence" value="ECO:0000318"/>
    <property type="project" value="GO_Central"/>
</dbReference>
<dbReference type="GO" id="GO:0032946">
    <property type="term" value="P:positive regulation of mononuclear cell proliferation"/>
    <property type="evidence" value="ECO:0007669"/>
    <property type="project" value="Ensembl"/>
</dbReference>
<dbReference type="GO" id="GO:0032465">
    <property type="term" value="P:regulation of cytokinesis"/>
    <property type="evidence" value="ECO:0000250"/>
    <property type="project" value="UniProtKB"/>
</dbReference>
<dbReference type="GO" id="GO:0040008">
    <property type="term" value="P:regulation of growth"/>
    <property type="evidence" value="ECO:0007669"/>
    <property type="project" value="Ensembl"/>
</dbReference>
<dbReference type="GO" id="GO:0046902">
    <property type="term" value="P:regulation of mitochondrial membrane permeability"/>
    <property type="evidence" value="ECO:0007669"/>
    <property type="project" value="Ensembl"/>
</dbReference>
<dbReference type="GO" id="GO:0051881">
    <property type="term" value="P:regulation of mitochondrial membrane potential"/>
    <property type="evidence" value="ECO:0007669"/>
    <property type="project" value="Ensembl"/>
</dbReference>
<dbReference type="GO" id="GO:0001836">
    <property type="term" value="P:release of cytochrome c from mitochondria"/>
    <property type="evidence" value="ECO:0000318"/>
    <property type="project" value="GO_Central"/>
</dbReference>
<dbReference type="GO" id="GO:0046898">
    <property type="term" value="P:response to cycloheximide"/>
    <property type="evidence" value="ECO:0007669"/>
    <property type="project" value="Ensembl"/>
</dbReference>
<dbReference type="GO" id="GO:0034097">
    <property type="term" value="P:response to cytokine"/>
    <property type="evidence" value="ECO:0007669"/>
    <property type="project" value="Ensembl"/>
</dbReference>
<dbReference type="GO" id="GO:0007283">
    <property type="term" value="P:spermatogenesis"/>
    <property type="evidence" value="ECO:0007669"/>
    <property type="project" value="Ensembl"/>
</dbReference>
<dbReference type="CDD" id="cd06845">
    <property type="entry name" value="Bcl-2_like"/>
    <property type="match status" value="1"/>
</dbReference>
<dbReference type="FunFam" id="1.10.437.10:FF:000003">
    <property type="entry name" value="Bcl-2-like protein 1"/>
    <property type="match status" value="1"/>
</dbReference>
<dbReference type="Gene3D" id="1.10.437.10">
    <property type="entry name" value="Blc2-like"/>
    <property type="match status" value="1"/>
</dbReference>
<dbReference type="InterPro" id="IPR013279">
    <property type="entry name" value="Apop_reg_BclX"/>
</dbReference>
<dbReference type="InterPro" id="IPR036834">
    <property type="entry name" value="Bcl-2-like_sf"/>
</dbReference>
<dbReference type="InterPro" id="IPR046371">
    <property type="entry name" value="Bcl-2_BH1-3"/>
</dbReference>
<dbReference type="InterPro" id="IPR026298">
    <property type="entry name" value="Bcl-2_fam"/>
</dbReference>
<dbReference type="InterPro" id="IPR002475">
    <property type="entry name" value="Bcl2-like"/>
</dbReference>
<dbReference type="InterPro" id="IPR004725">
    <property type="entry name" value="Bcl2/BclX"/>
</dbReference>
<dbReference type="InterPro" id="IPR020717">
    <property type="entry name" value="Bcl2_BH1_motif_CS"/>
</dbReference>
<dbReference type="InterPro" id="IPR020726">
    <property type="entry name" value="Bcl2_BH2_motif_CS"/>
</dbReference>
<dbReference type="InterPro" id="IPR020728">
    <property type="entry name" value="Bcl2_BH3_motif_CS"/>
</dbReference>
<dbReference type="InterPro" id="IPR003093">
    <property type="entry name" value="Bcl2_BH4"/>
</dbReference>
<dbReference type="InterPro" id="IPR020731">
    <property type="entry name" value="Bcl2_BH4_motif_CS"/>
</dbReference>
<dbReference type="NCBIfam" id="TIGR00865">
    <property type="entry name" value="bcl-2"/>
    <property type="match status" value="1"/>
</dbReference>
<dbReference type="PANTHER" id="PTHR11256">
    <property type="entry name" value="BCL-2 RELATED"/>
    <property type="match status" value="1"/>
</dbReference>
<dbReference type="PANTHER" id="PTHR11256:SF12">
    <property type="entry name" value="BCL-2-LIKE PROTEIN 1"/>
    <property type="match status" value="1"/>
</dbReference>
<dbReference type="Pfam" id="PF00452">
    <property type="entry name" value="Bcl-2"/>
    <property type="match status" value="1"/>
</dbReference>
<dbReference type="Pfam" id="PF02180">
    <property type="entry name" value="BH4"/>
    <property type="match status" value="1"/>
</dbReference>
<dbReference type="PRINTS" id="PR01864">
    <property type="entry name" value="APOPREGBCLX"/>
</dbReference>
<dbReference type="PRINTS" id="PR01862">
    <property type="entry name" value="BCL2FAMILY"/>
</dbReference>
<dbReference type="SMART" id="SM00337">
    <property type="entry name" value="BCL"/>
    <property type="match status" value="1"/>
</dbReference>
<dbReference type="SMART" id="SM00265">
    <property type="entry name" value="BH4"/>
    <property type="match status" value="1"/>
</dbReference>
<dbReference type="SUPFAM" id="SSF56854">
    <property type="entry name" value="Bcl-2 inhibitors of programmed cell death"/>
    <property type="match status" value="1"/>
</dbReference>
<dbReference type="PROSITE" id="PS50062">
    <property type="entry name" value="BCL2_FAMILY"/>
    <property type="match status" value="1"/>
</dbReference>
<dbReference type="PROSITE" id="PS01080">
    <property type="entry name" value="BH1"/>
    <property type="match status" value="1"/>
</dbReference>
<dbReference type="PROSITE" id="PS01258">
    <property type="entry name" value="BH2"/>
    <property type="match status" value="1"/>
</dbReference>
<dbReference type="PROSITE" id="PS01259">
    <property type="entry name" value="BH3"/>
    <property type="match status" value="1"/>
</dbReference>
<dbReference type="PROSITE" id="PS01260">
    <property type="entry name" value="BH4_1"/>
    <property type="match status" value="1"/>
</dbReference>
<dbReference type="PROSITE" id="PS50063">
    <property type="entry name" value="BH4_2"/>
    <property type="match status" value="1"/>
</dbReference>
<evidence type="ECO:0000250" key="1"/>
<evidence type="ECO:0000255" key="2"/>
<evidence type="ECO:0000305" key="3"/>
<comment type="function">
    <text evidence="1">Dominant regulator of apoptotic cell death. The long form displays cell death repressor activity, whereas the short isoform promotes apoptosis. Also acts as a regulator of G2 checkpoint and progression to cytokinesis during mitosis (By similarity).</text>
</comment>
<comment type="subcellular location">
    <subcellularLocation>
        <location evidence="1">Mitochondrion membrane</location>
        <topology evidence="1">Single-pass membrane protein</topology>
    </subcellularLocation>
    <subcellularLocation>
        <location evidence="1">Nucleus membrane</location>
        <topology evidence="1">Single-pass membrane protein</topology>
        <orientation evidence="1">Cytoplasmic side</orientation>
    </subcellularLocation>
    <subcellularLocation>
        <location evidence="1">Mitochondrion matrix</location>
    </subcellularLocation>
    <subcellularLocation>
        <location evidence="1">Cytoplasm</location>
        <location evidence="1">Cytoskeleton</location>
        <location evidence="1">Microtubule organizing center</location>
        <location evidence="1">Centrosome</location>
    </subcellularLocation>
    <subcellularLocation>
        <location evidence="1">Cytoplasm</location>
        <location evidence="1">Cytosol</location>
    </subcellularLocation>
    <subcellularLocation>
        <location evidence="1">Cytoplasmic vesicle</location>
        <location evidence="1">Secretory vesicle</location>
        <location evidence="1">Synaptic vesicle membrane</location>
    </subcellularLocation>
    <text evidence="1">After neuronal stimulation, translocates from cytosol to synaptic vesicle and mitochondrion membrane in a calmodulin-dependent manner.</text>
</comment>
<comment type="alternative products">
    <event type="alternative splicing"/>
    <isoform>
        <id>Q07816-1</id>
        <name>Long</name>
        <sequence type="displayed"/>
    </isoform>
    <isoform>
        <id>Q07816-2</id>
        <name>Short</name>
        <sequence type="described" ref="VSP_000514"/>
    </isoform>
</comment>
<comment type="tissue specificity">
    <text>Highest expression in organs with lymphoid development.</text>
</comment>
<comment type="domain">
    <text evidence="1">The BH4 motif seems to be involved in the anti-apoptotic function. Intact BH1 and BH2 motifs are required for anti-apoptotic activity (By similarity).</text>
</comment>
<comment type="similarity">
    <text evidence="3">Belongs to the Bcl-2 family.</text>
</comment>
<name>B2CL1_CHICK</name>
<proteinExistence type="evidence at transcript level"/>
<protein>
    <recommendedName>
        <fullName>Bcl-2-like protein 1</fullName>
        <shortName>Bcl2-L-1</shortName>
    </recommendedName>
    <alternativeName>
        <fullName>Apoptosis regulator Bcl-X</fullName>
    </alternativeName>
</protein>
<gene>
    <name type="primary">BCL2L1</name>
    <name type="synonym">BCL-X</name>
    <name type="synonym">BCLX</name>
</gene>
<feature type="chain" id="PRO_0000143061" description="Bcl-2-like protein 1">
    <location>
        <begin position="1"/>
        <end position="229"/>
    </location>
</feature>
<feature type="transmembrane region" description="Helical" evidence="2">
    <location>
        <begin position="206"/>
        <end position="223"/>
    </location>
</feature>
<feature type="short sequence motif" description="BH4">
    <location>
        <begin position="4"/>
        <end position="24"/>
    </location>
</feature>
<feature type="short sequence motif" description="BH3">
    <location>
        <begin position="82"/>
        <end position="96"/>
    </location>
</feature>
<feature type="short sequence motif" description="BH1">
    <location>
        <begin position="125"/>
        <end position="144"/>
    </location>
</feature>
<feature type="short sequence motif" description="BH2">
    <location>
        <begin position="176"/>
        <end position="191"/>
    </location>
</feature>
<feature type="splice variant" id="VSP_000514" description="In isoform Short." evidence="3">
    <original>ERFVDLYGNNAAAELRKGQETFNKWLLTGATVAGVLLLGSLLSRK</original>
    <variation>VRTALP</variation>
    <location>
        <begin position="185"/>
        <end position="229"/>
    </location>
</feature>